<keyword id="KW-0007">Acetylation</keyword>
<keyword id="KW-0106">Calcium</keyword>
<keyword id="KW-0903">Direct protein sequencing</keyword>
<keyword id="KW-0472">Membrane</keyword>
<keyword id="KW-0479">Metal-binding</keyword>
<keyword id="KW-0496">Mitochondrion</keyword>
<keyword id="KW-0999">Mitochondrion inner membrane</keyword>
<keyword id="KW-1185">Reference proteome</keyword>
<keyword id="KW-0677">Repeat</keyword>
<keyword id="KW-0812">Transmembrane</keyword>
<keyword id="KW-1133">Transmembrane helix</keyword>
<keyword id="KW-0813">Transport</keyword>
<name>S2512_MOUSE</name>
<reference key="1">
    <citation type="journal article" date="2005" name="Science">
        <title>The transcriptional landscape of the mammalian genome.</title>
        <authorList>
            <person name="Carninci P."/>
            <person name="Kasukawa T."/>
            <person name="Katayama S."/>
            <person name="Gough J."/>
            <person name="Frith M.C."/>
            <person name="Maeda N."/>
            <person name="Oyama R."/>
            <person name="Ravasi T."/>
            <person name="Lenhard B."/>
            <person name="Wells C."/>
            <person name="Kodzius R."/>
            <person name="Shimokawa K."/>
            <person name="Bajic V.B."/>
            <person name="Brenner S.E."/>
            <person name="Batalov S."/>
            <person name="Forrest A.R."/>
            <person name="Zavolan M."/>
            <person name="Davis M.J."/>
            <person name="Wilming L.G."/>
            <person name="Aidinis V."/>
            <person name="Allen J.E."/>
            <person name="Ambesi-Impiombato A."/>
            <person name="Apweiler R."/>
            <person name="Aturaliya R.N."/>
            <person name="Bailey T.L."/>
            <person name="Bansal M."/>
            <person name="Baxter L."/>
            <person name="Beisel K.W."/>
            <person name="Bersano T."/>
            <person name="Bono H."/>
            <person name="Chalk A.M."/>
            <person name="Chiu K.P."/>
            <person name="Choudhary V."/>
            <person name="Christoffels A."/>
            <person name="Clutterbuck D.R."/>
            <person name="Crowe M.L."/>
            <person name="Dalla E."/>
            <person name="Dalrymple B.P."/>
            <person name="de Bono B."/>
            <person name="Della Gatta G."/>
            <person name="di Bernardo D."/>
            <person name="Down T."/>
            <person name="Engstrom P."/>
            <person name="Fagiolini M."/>
            <person name="Faulkner G."/>
            <person name="Fletcher C.F."/>
            <person name="Fukushima T."/>
            <person name="Furuno M."/>
            <person name="Futaki S."/>
            <person name="Gariboldi M."/>
            <person name="Georgii-Hemming P."/>
            <person name="Gingeras T.R."/>
            <person name="Gojobori T."/>
            <person name="Green R.E."/>
            <person name="Gustincich S."/>
            <person name="Harbers M."/>
            <person name="Hayashi Y."/>
            <person name="Hensch T.K."/>
            <person name="Hirokawa N."/>
            <person name="Hill D."/>
            <person name="Huminiecki L."/>
            <person name="Iacono M."/>
            <person name="Ikeo K."/>
            <person name="Iwama A."/>
            <person name="Ishikawa T."/>
            <person name="Jakt M."/>
            <person name="Kanapin A."/>
            <person name="Katoh M."/>
            <person name="Kawasawa Y."/>
            <person name="Kelso J."/>
            <person name="Kitamura H."/>
            <person name="Kitano H."/>
            <person name="Kollias G."/>
            <person name="Krishnan S.P."/>
            <person name="Kruger A."/>
            <person name="Kummerfeld S.K."/>
            <person name="Kurochkin I.V."/>
            <person name="Lareau L.F."/>
            <person name="Lazarevic D."/>
            <person name="Lipovich L."/>
            <person name="Liu J."/>
            <person name="Liuni S."/>
            <person name="McWilliam S."/>
            <person name="Madan Babu M."/>
            <person name="Madera M."/>
            <person name="Marchionni L."/>
            <person name="Matsuda H."/>
            <person name="Matsuzawa S."/>
            <person name="Miki H."/>
            <person name="Mignone F."/>
            <person name="Miyake S."/>
            <person name="Morris K."/>
            <person name="Mottagui-Tabar S."/>
            <person name="Mulder N."/>
            <person name="Nakano N."/>
            <person name="Nakauchi H."/>
            <person name="Ng P."/>
            <person name="Nilsson R."/>
            <person name="Nishiguchi S."/>
            <person name="Nishikawa S."/>
            <person name="Nori F."/>
            <person name="Ohara O."/>
            <person name="Okazaki Y."/>
            <person name="Orlando V."/>
            <person name="Pang K.C."/>
            <person name="Pavan W.J."/>
            <person name="Pavesi G."/>
            <person name="Pesole G."/>
            <person name="Petrovsky N."/>
            <person name="Piazza S."/>
            <person name="Reed J."/>
            <person name="Reid J.F."/>
            <person name="Ring B.Z."/>
            <person name="Ringwald M."/>
            <person name="Rost B."/>
            <person name="Ruan Y."/>
            <person name="Salzberg S.L."/>
            <person name="Sandelin A."/>
            <person name="Schneider C."/>
            <person name="Schoenbach C."/>
            <person name="Sekiguchi K."/>
            <person name="Semple C.A."/>
            <person name="Seno S."/>
            <person name="Sessa L."/>
            <person name="Sheng Y."/>
            <person name="Shibata Y."/>
            <person name="Shimada H."/>
            <person name="Shimada K."/>
            <person name="Silva D."/>
            <person name="Sinclair B."/>
            <person name="Sperling S."/>
            <person name="Stupka E."/>
            <person name="Sugiura K."/>
            <person name="Sultana R."/>
            <person name="Takenaka Y."/>
            <person name="Taki K."/>
            <person name="Tammoja K."/>
            <person name="Tan S.L."/>
            <person name="Tang S."/>
            <person name="Taylor M.S."/>
            <person name="Tegner J."/>
            <person name="Teichmann S.A."/>
            <person name="Ueda H.R."/>
            <person name="van Nimwegen E."/>
            <person name="Verardo R."/>
            <person name="Wei C.L."/>
            <person name="Yagi K."/>
            <person name="Yamanishi H."/>
            <person name="Zabarovsky E."/>
            <person name="Zhu S."/>
            <person name="Zimmer A."/>
            <person name="Hide W."/>
            <person name="Bult C."/>
            <person name="Grimmond S.M."/>
            <person name="Teasdale R.D."/>
            <person name="Liu E.T."/>
            <person name="Brusic V."/>
            <person name="Quackenbush J."/>
            <person name="Wahlestedt C."/>
            <person name="Mattick J.S."/>
            <person name="Hume D.A."/>
            <person name="Kai C."/>
            <person name="Sasaki D."/>
            <person name="Tomaru Y."/>
            <person name="Fukuda S."/>
            <person name="Kanamori-Katayama M."/>
            <person name="Suzuki M."/>
            <person name="Aoki J."/>
            <person name="Arakawa T."/>
            <person name="Iida J."/>
            <person name="Imamura K."/>
            <person name="Itoh M."/>
            <person name="Kato T."/>
            <person name="Kawaji H."/>
            <person name="Kawagashira N."/>
            <person name="Kawashima T."/>
            <person name="Kojima M."/>
            <person name="Kondo S."/>
            <person name="Konno H."/>
            <person name="Nakano K."/>
            <person name="Ninomiya N."/>
            <person name="Nishio T."/>
            <person name="Okada M."/>
            <person name="Plessy C."/>
            <person name="Shibata K."/>
            <person name="Shiraki T."/>
            <person name="Suzuki S."/>
            <person name="Tagami M."/>
            <person name="Waki K."/>
            <person name="Watahiki A."/>
            <person name="Okamura-Oho Y."/>
            <person name="Suzuki H."/>
            <person name="Kawai J."/>
            <person name="Hayashizaki Y."/>
        </authorList>
    </citation>
    <scope>NUCLEOTIDE SEQUENCE [LARGE SCALE MRNA]</scope>
    <source>
        <strain>C57BL/6J</strain>
        <tissue>Hippocampus</tissue>
        <tissue>Pituitary</tissue>
    </source>
</reference>
<reference key="2">
    <citation type="journal article" date="2009" name="PLoS Biol.">
        <title>Lineage-specific biology revealed by a finished genome assembly of the mouse.</title>
        <authorList>
            <person name="Church D.M."/>
            <person name="Goodstadt L."/>
            <person name="Hillier L.W."/>
            <person name="Zody M.C."/>
            <person name="Goldstein S."/>
            <person name="She X."/>
            <person name="Bult C.J."/>
            <person name="Agarwala R."/>
            <person name="Cherry J.L."/>
            <person name="DiCuccio M."/>
            <person name="Hlavina W."/>
            <person name="Kapustin Y."/>
            <person name="Meric P."/>
            <person name="Maglott D."/>
            <person name="Birtle Z."/>
            <person name="Marques A.C."/>
            <person name="Graves T."/>
            <person name="Zhou S."/>
            <person name="Teague B."/>
            <person name="Potamousis K."/>
            <person name="Churas C."/>
            <person name="Place M."/>
            <person name="Herschleb J."/>
            <person name="Runnheim R."/>
            <person name="Forrest D."/>
            <person name="Amos-Landgraf J."/>
            <person name="Schwartz D.C."/>
            <person name="Cheng Z."/>
            <person name="Lindblad-Toh K."/>
            <person name="Eichler E.E."/>
            <person name="Ponting C.P."/>
        </authorList>
    </citation>
    <scope>NUCLEOTIDE SEQUENCE [LARGE SCALE GENOMIC DNA]</scope>
    <source>
        <strain>C57BL/6J</strain>
    </source>
</reference>
<reference key="3">
    <citation type="journal article" date="2004" name="Genome Res.">
        <title>The status, quality, and expansion of the NIH full-length cDNA project: the Mammalian Gene Collection (MGC).</title>
        <authorList>
            <consortium name="The MGC Project Team"/>
        </authorList>
    </citation>
    <scope>NUCLEOTIDE SEQUENCE [LARGE SCALE MRNA]</scope>
    <source>
        <tissue>Olfactory epithelium</tissue>
    </source>
</reference>
<reference key="4">
    <citation type="submission" date="2007-04" db="UniProtKB">
        <authorList>
            <person name="Lubec G."/>
            <person name="Kang S.U."/>
        </authorList>
    </citation>
    <scope>PROTEIN SEQUENCE OF 18-68; 144-163; 174-190; 234-243; 245-259; 284-309; 330-351; 359-370; 382-403; 407-414; 454-482; 491-543; 552-565; 570-578; 587-622; 625-659 AND 662-671</scope>
    <source>
        <strain>C57BL/6J</strain>
        <tissue>Brain</tissue>
    </source>
</reference>
<reference key="5">
    <citation type="journal article" date="2010" name="Cell">
        <title>A tissue-specific atlas of mouse protein phosphorylation and expression.</title>
        <authorList>
            <person name="Huttlin E.L."/>
            <person name="Jedrychowski M.P."/>
            <person name="Elias J.E."/>
            <person name="Goswami T."/>
            <person name="Rad R."/>
            <person name="Beausoleil S.A."/>
            <person name="Villen J."/>
            <person name="Haas W."/>
            <person name="Sowa M.E."/>
            <person name="Gygi S.P."/>
        </authorList>
    </citation>
    <scope>IDENTIFICATION BY MASS SPECTROMETRY [LARGE SCALE ANALYSIS]</scope>
    <source>
        <tissue>Brain</tissue>
        <tissue>Brown adipose tissue</tissue>
        <tissue>Heart</tissue>
        <tissue>Kidney</tissue>
        <tissue>Liver</tissue>
        <tissue>Lung</tissue>
        <tissue>Pancreas</tissue>
        <tissue>Spleen</tissue>
        <tissue>Testis</tissue>
    </source>
</reference>
<organism evidence="7">
    <name type="scientific">Mus musculus</name>
    <name type="common">Mouse</name>
    <dbReference type="NCBI Taxonomy" id="10090"/>
    <lineage>
        <taxon>Eukaryota</taxon>
        <taxon>Metazoa</taxon>
        <taxon>Chordata</taxon>
        <taxon>Craniata</taxon>
        <taxon>Vertebrata</taxon>
        <taxon>Euteleostomi</taxon>
        <taxon>Mammalia</taxon>
        <taxon>Eutheria</taxon>
        <taxon>Euarchontoglires</taxon>
        <taxon>Glires</taxon>
        <taxon>Rodentia</taxon>
        <taxon>Myomorpha</taxon>
        <taxon>Muroidea</taxon>
        <taxon>Muridae</taxon>
        <taxon>Murinae</taxon>
        <taxon>Mus</taxon>
        <taxon>Mus</taxon>
    </lineage>
</organism>
<gene>
    <name evidence="6" type="primary">Slc25a12</name>
</gene>
<proteinExistence type="evidence at protein level"/>
<accession>Q8BH59</accession>
<accession>A2BFG0</accession>
<feature type="initiator methionine" description="Removed" evidence="2">
    <location>
        <position position="1"/>
    </location>
</feature>
<feature type="chain" id="PRO_0000090599" description="Electrogenic aspartate/glutamate antiporter SLC25A12, mitochondrial">
    <location>
        <begin position="2"/>
        <end position="677"/>
    </location>
</feature>
<feature type="topological domain" description="Mitochondrial intermembrane" evidence="5">
    <location>
        <begin position="2"/>
        <end position="329"/>
    </location>
</feature>
<feature type="transmembrane region" description="Helical; Name=1" evidence="2">
    <location>
        <begin position="330"/>
        <end position="347"/>
    </location>
</feature>
<feature type="topological domain" description="Mitochondrial matrix" evidence="5">
    <location>
        <begin position="348"/>
        <end position="390"/>
    </location>
</feature>
<feature type="transmembrane region" description="Helical; Name=2" evidence="2">
    <location>
        <begin position="391"/>
        <end position="410"/>
    </location>
</feature>
<feature type="topological domain" description="Mitochondrial intermembrane" evidence="5">
    <location>
        <begin position="411"/>
        <end position="433"/>
    </location>
</feature>
<feature type="transmembrane region" description="Helical; Name=3" evidence="2">
    <location>
        <begin position="434"/>
        <end position="447"/>
    </location>
</feature>
<feature type="topological domain" description="Mitochondrial matrix" evidence="5">
    <location>
        <begin position="448"/>
        <end position="482"/>
    </location>
</feature>
<feature type="transmembrane region" description="Helical; Name=4" evidence="2">
    <location>
        <begin position="483"/>
        <end position="502"/>
    </location>
</feature>
<feature type="topological domain" description="Mitochondrial intermembrane" evidence="5">
    <location>
        <begin position="503"/>
        <end position="521"/>
    </location>
</feature>
<feature type="transmembrane region" description="Helical; Name=5" evidence="2">
    <location>
        <begin position="522"/>
        <end position="539"/>
    </location>
</feature>
<feature type="topological domain" description="Mitochondrial matrix" evidence="5">
    <location>
        <begin position="540"/>
        <end position="578"/>
    </location>
</feature>
<feature type="transmembrane region" description="Helical; Name=6" evidence="2">
    <location>
        <begin position="579"/>
        <end position="598"/>
    </location>
</feature>
<feature type="topological domain" description="Mitochondrial intermembrane" evidence="5">
    <location>
        <begin position="599"/>
        <end position="677"/>
    </location>
</feature>
<feature type="domain" description="EF-hand 1" evidence="5">
    <location>
        <begin position="40"/>
        <end position="85"/>
    </location>
</feature>
<feature type="domain" description="EF-hand 2" evidence="4">
    <location>
        <begin position="86"/>
        <end position="121"/>
    </location>
</feature>
<feature type="domain" description="EF-hand 3" evidence="5">
    <location>
        <begin position="122"/>
        <end position="156"/>
    </location>
</feature>
<feature type="domain" description="EF-hand 4" evidence="4">
    <location>
        <begin position="157"/>
        <end position="192"/>
    </location>
</feature>
<feature type="repeat" description="Solcar 1" evidence="3">
    <location>
        <begin position="324"/>
        <end position="416"/>
    </location>
</feature>
<feature type="repeat" description="Solcar 2" evidence="3">
    <location>
        <begin position="424"/>
        <end position="508"/>
    </location>
</feature>
<feature type="repeat" description="Solcar 3" evidence="3">
    <location>
        <begin position="516"/>
        <end position="604"/>
    </location>
</feature>
<feature type="region of interest" description="Regulatory N-terminal domain" evidence="2">
    <location>
        <begin position="2"/>
        <end position="294"/>
    </location>
</feature>
<feature type="region of interest" description="Linker loop domain" evidence="2">
    <location>
        <begin position="295"/>
        <end position="310"/>
    </location>
</feature>
<feature type="region of interest" description="Carrier domain" evidence="2">
    <location>
        <begin position="320"/>
        <end position="612"/>
    </location>
</feature>
<feature type="region of interest" description="C-terminal domain" evidence="2">
    <location>
        <begin position="613"/>
        <end position="677"/>
    </location>
</feature>
<feature type="binding site" evidence="2">
    <location>
        <position position="65"/>
    </location>
    <ligand>
        <name>Ca(2+)</name>
        <dbReference type="ChEBI" id="CHEBI:29108"/>
    </ligand>
</feature>
<feature type="binding site" evidence="2">
    <location>
        <position position="67"/>
    </location>
    <ligand>
        <name>Ca(2+)</name>
        <dbReference type="ChEBI" id="CHEBI:29108"/>
    </ligand>
</feature>
<feature type="binding site" evidence="2">
    <location>
        <position position="69"/>
    </location>
    <ligand>
        <name>Ca(2+)</name>
        <dbReference type="ChEBI" id="CHEBI:29108"/>
    </ligand>
</feature>
<feature type="binding site" evidence="2">
    <location>
        <position position="71"/>
    </location>
    <ligand>
        <name>Ca(2+)</name>
        <dbReference type="ChEBI" id="CHEBI:29108"/>
    </ligand>
</feature>
<feature type="binding site" evidence="2">
    <location>
        <position position="76"/>
    </location>
    <ligand>
        <name>Ca(2+)</name>
        <dbReference type="ChEBI" id="CHEBI:29108"/>
    </ligand>
</feature>
<feature type="modified residue" description="N-acetylalanine" evidence="2">
    <location>
        <position position="2"/>
    </location>
</feature>
<evidence type="ECO:0000250" key="1">
    <source>
        <dbReference type="UniProtKB" id="F1LX07"/>
    </source>
</evidence>
<evidence type="ECO:0000250" key="2">
    <source>
        <dbReference type="UniProtKB" id="O75746"/>
    </source>
</evidence>
<evidence type="ECO:0000255" key="3">
    <source>
        <dbReference type="PROSITE-ProRule" id="PRU00282"/>
    </source>
</evidence>
<evidence type="ECO:0000255" key="4">
    <source>
        <dbReference type="PROSITE-ProRule" id="PRU00448"/>
    </source>
</evidence>
<evidence type="ECO:0000305" key="5"/>
<evidence type="ECO:0000312" key="6">
    <source>
        <dbReference type="MGI" id="MGI:1926080"/>
    </source>
</evidence>
<evidence type="ECO:0000312" key="7">
    <source>
        <dbReference type="Proteomes" id="UP000000589"/>
    </source>
</evidence>
<protein>
    <recommendedName>
        <fullName evidence="2">Electrogenic aspartate/glutamate antiporter SLC25A12, mitochondrial</fullName>
    </recommendedName>
    <alternativeName>
        <fullName evidence="6">Solute carrier family 25 member 12</fullName>
    </alternativeName>
</protein>
<sequence>MAVKVHTTKRGDPHELRNIFLQYASTEVDGEHYMTPEDFVQRYLGLYNDPNSNPKIVQLLAGVADQTKDGLISYQEFLAFESVLCAPDSMFIVAFQLFDKSGNGEVTFENVKEIFGQTIIHHHIPFNWDCEFIRLHFGHNRKKHLNYVEFTQFLQELQLEHARQAFALKDKSKSGMISGLDFSDVMVTIRSHMLTPFVEENLVSAAGGGTSHQVSFSYFNAFNSLLNNMELVRKIYSTLAGTRKDIEVTKEEFAQSAIRYGQVTPLEIDILYQLADLYNASGRLTLADIERIAPLAEGALPYNLAELQRQQSPGLGRPIWLQIAESAYRFTLGSVAGAVGATAVYPIDLVKTRMQNQRGTGSVVGELMYKNSFDCFKKVLRYEGFFGLYRGLIPQLIGVAPEKAIKLTVNDFVRDKFTKRDGSIPLPAEILAGGCAGGSQVIFTNPLEIVKIRLQVAGEITTGPRVSALNVLQDLGLFGLYKGAKACFLRDIPFSAIYFPVYAHCKLLLADENGRVGGINLLTAGALAGVPAASLVTPADVIKTRLQVAARAGQTTYSGVVDCFRKILREEGPSAFWKGTAARVFRSSPQFGVTLVTYELLQRWFYIDFGGLKPSGSEPTPKSRIADLPPANPDHIGGYRLATATFAGIENKFGLYLPKFKSPSVAVAQPKAAAAAQ</sequence>
<dbReference type="EMBL" id="AK030595">
    <property type="protein sequence ID" value="BAC27037.1"/>
    <property type="molecule type" value="mRNA"/>
</dbReference>
<dbReference type="EMBL" id="AK083156">
    <property type="protein sequence ID" value="BAC38787.1"/>
    <property type="molecule type" value="mRNA"/>
</dbReference>
<dbReference type="EMBL" id="BX284624">
    <property type="status" value="NOT_ANNOTATED_CDS"/>
    <property type="molecule type" value="Genomic_DNA"/>
</dbReference>
<dbReference type="EMBL" id="BC060505">
    <property type="protein sequence ID" value="AAH60505.1"/>
    <property type="molecule type" value="mRNA"/>
</dbReference>
<dbReference type="CCDS" id="CCDS16113.1"/>
<dbReference type="RefSeq" id="NP_766024.1">
    <property type="nucleotide sequence ID" value="NM_172436.5"/>
</dbReference>
<dbReference type="SMR" id="Q8BH59"/>
<dbReference type="BioGRID" id="219664">
    <property type="interactions" value="30"/>
</dbReference>
<dbReference type="FunCoup" id="Q8BH59">
    <property type="interactions" value="2011"/>
</dbReference>
<dbReference type="IntAct" id="Q8BH59">
    <property type="interactions" value="18"/>
</dbReference>
<dbReference type="MINT" id="Q8BH59"/>
<dbReference type="STRING" id="10090.ENSMUSP00000122103"/>
<dbReference type="GlyGen" id="Q8BH59">
    <property type="glycosylation" value="1 site, 1 O-linked glycan (1 site)"/>
</dbReference>
<dbReference type="iPTMnet" id="Q8BH59"/>
<dbReference type="PhosphoSitePlus" id="Q8BH59"/>
<dbReference type="SwissPalm" id="Q8BH59"/>
<dbReference type="jPOST" id="Q8BH59"/>
<dbReference type="PaxDb" id="10090-ENSMUSP00000122103"/>
<dbReference type="PeptideAtlas" id="Q8BH59"/>
<dbReference type="ProteomicsDB" id="283389"/>
<dbReference type="Pumba" id="Q8BH59"/>
<dbReference type="Antibodypedia" id="33855">
    <property type="antibodies" value="227 antibodies from 27 providers"/>
</dbReference>
<dbReference type="DNASU" id="78830"/>
<dbReference type="Ensembl" id="ENSMUST00000151937.8">
    <property type="protein sequence ID" value="ENSMUSP00000122103.2"/>
    <property type="gene ID" value="ENSMUSG00000027010.17"/>
</dbReference>
<dbReference type="GeneID" id="78830"/>
<dbReference type="KEGG" id="mmu:78830"/>
<dbReference type="UCSC" id="uc008kan.1">
    <property type="organism name" value="mouse"/>
</dbReference>
<dbReference type="AGR" id="MGI:1926080"/>
<dbReference type="CTD" id="8604"/>
<dbReference type="MGI" id="MGI:1926080">
    <property type="gene designation" value="Slc25a12"/>
</dbReference>
<dbReference type="VEuPathDB" id="HostDB:ENSMUSG00000027010"/>
<dbReference type="eggNOG" id="KOG0751">
    <property type="taxonomic scope" value="Eukaryota"/>
</dbReference>
<dbReference type="GeneTree" id="ENSGT00940000155963"/>
<dbReference type="HOGENOM" id="CLU_014931_3_0_1"/>
<dbReference type="InParanoid" id="Q8BH59"/>
<dbReference type="OMA" id="AFQNVMR"/>
<dbReference type="OrthoDB" id="2161at2759"/>
<dbReference type="PhylomeDB" id="Q8BH59"/>
<dbReference type="TreeFam" id="TF313209"/>
<dbReference type="Reactome" id="R-MMU-8963693">
    <property type="pathway name" value="Aspartate and asparagine metabolism"/>
</dbReference>
<dbReference type="Reactome" id="R-MMU-9856872">
    <property type="pathway name" value="Malate-aspartate shuttle"/>
</dbReference>
<dbReference type="BioGRID-ORCS" id="78830">
    <property type="hits" value="4 hits in 77 CRISPR screens"/>
</dbReference>
<dbReference type="CD-CODE" id="CE726F99">
    <property type="entry name" value="Postsynaptic density"/>
</dbReference>
<dbReference type="ChiTaRS" id="Slc25a12">
    <property type="organism name" value="mouse"/>
</dbReference>
<dbReference type="PRO" id="PR:Q8BH59"/>
<dbReference type="Proteomes" id="UP000000589">
    <property type="component" value="Chromosome 2"/>
</dbReference>
<dbReference type="RNAct" id="Q8BH59">
    <property type="molecule type" value="protein"/>
</dbReference>
<dbReference type="Bgee" id="ENSMUSG00000027010">
    <property type="expression patterns" value="Expressed in digastric muscle group and 227 other cell types or tissues"/>
</dbReference>
<dbReference type="ExpressionAtlas" id="Q8BH59">
    <property type="expression patterns" value="baseline and differential"/>
</dbReference>
<dbReference type="GO" id="GO:0005743">
    <property type="term" value="C:mitochondrial inner membrane"/>
    <property type="evidence" value="ECO:0000314"/>
    <property type="project" value="MGI"/>
</dbReference>
<dbReference type="GO" id="GO:0005739">
    <property type="term" value="C:mitochondrion"/>
    <property type="evidence" value="ECO:0000314"/>
    <property type="project" value="MGI"/>
</dbReference>
<dbReference type="GO" id="GO:0043209">
    <property type="term" value="C:myelin sheath"/>
    <property type="evidence" value="ECO:0007005"/>
    <property type="project" value="UniProtKB"/>
</dbReference>
<dbReference type="GO" id="GO:0000514">
    <property type="term" value="F:3-sulfino-L-alanine: proton, glutamate antiporter activity"/>
    <property type="evidence" value="ECO:0000250"/>
    <property type="project" value="UniProtKB"/>
</dbReference>
<dbReference type="GO" id="GO:0015172">
    <property type="term" value="F:acidic amino acid transmembrane transporter activity"/>
    <property type="evidence" value="ECO:0000315"/>
    <property type="project" value="MGI"/>
</dbReference>
<dbReference type="GO" id="GO:0000515">
    <property type="term" value="F:aspartate:glutamate, proton antiporter activity"/>
    <property type="evidence" value="ECO:0000315"/>
    <property type="project" value="MGI"/>
</dbReference>
<dbReference type="GO" id="GO:0005509">
    <property type="term" value="F:calcium ion binding"/>
    <property type="evidence" value="ECO:0000250"/>
    <property type="project" value="UniProtKB"/>
</dbReference>
<dbReference type="GO" id="GO:0042802">
    <property type="term" value="F:identical protein binding"/>
    <property type="evidence" value="ECO:0000250"/>
    <property type="project" value="UniProtKB"/>
</dbReference>
<dbReference type="GO" id="GO:0015810">
    <property type="term" value="P:aspartate transmembrane transport"/>
    <property type="evidence" value="ECO:0000250"/>
    <property type="project" value="UniProtKB"/>
</dbReference>
<dbReference type="GO" id="GO:0015813">
    <property type="term" value="P:L-glutamate transmembrane transport"/>
    <property type="evidence" value="ECO:0000250"/>
    <property type="project" value="UniProtKB"/>
</dbReference>
<dbReference type="GO" id="GO:0043490">
    <property type="term" value="P:malate-aspartate shuttle"/>
    <property type="evidence" value="ECO:0000314"/>
    <property type="project" value="MGI"/>
</dbReference>
<dbReference type="GO" id="GO:0051592">
    <property type="term" value="P:response to calcium ion"/>
    <property type="evidence" value="ECO:0000250"/>
    <property type="project" value="UniProtKB"/>
</dbReference>
<dbReference type="FunFam" id="1.50.40.10:FF:000004">
    <property type="entry name" value="Calcium-binding mitochondrial carrier protein Aralar1"/>
    <property type="match status" value="1"/>
</dbReference>
<dbReference type="FunFam" id="1.10.238.10:FF:000064">
    <property type="entry name" value="calcium-binding mitochondrial carrier protein Aralar1 isoform X1"/>
    <property type="match status" value="1"/>
</dbReference>
<dbReference type="Gene3D" id="1.10.238.10">
    <property type="entry name" value="EF-hand"/>
    <property type="match status" value="2"/>
</dbReference>
<dbReference type="Gene3D" id="1.50.40.10">
    <property type="entry name" value="Mitochondrial carrier domain"/>
    <property type="match status" value="1"/>
</dbReference>
<dbReference type="InterPro" id="IPR011992">
    <property type="entry name" value="EF-hand-dom_pair"/>
</dbReference>
<dbReference type="InterPro" id="IPR018247">
    <property type="entry name" value="EF_Hand_1_Ca_BS"/>
</dbReference>
<dbReference type="InterPro" id="IPR002048">
    <property type="entry name" value="EF_hand_dom"/>
</dbReference>
<dbReference type="InterPro" id="IPR002067">
    <property type="entry name" value="Mit_carrier"/>
</dbReference>
<dbReference type="InterPro" id="IPR051028">
    <property type="entry name" value="Mito_Solute_Carrier"/>
</dbReference>
<dbReference type="InterPro" id="IPR018108">
    <property type="entry name" value="Mitochondrial_sb/sol_carrier"/>
</dbReference>
<dbReference type="InterPro" id="IPR023395">
    <property type="entry name" value="Mt_carrier_dom_sf"/>
</dbReference>
<dbReference type="PANTHER" id="PTHR45678:SF7">
    <property type="entry name" value="ELECTROGENIC ASPARTATE_GLUTAMATE ANTIPORTER SLC25A12, MITOCHONDRIAL"/>
    <property type="match status" value="1"/>
</dbReference>
<dbReference type="PANTHER" id="PTHR45678">
    <property type="entry name" value="MITOCHONDRIAL 2-OXODICARBOXYLATE CARRIER 1-RELATED"/>
    <property type="match status" value="1"/>
</dbReference>
<dbReference type="Pfam" id="PF00153">
    <property type="entry name" value="Mito_carr"/>
    <property type="match status" value="3"/>
</dbReference>
<dbReference type="PRINTS" id="PR00926">
    <property type="entry name" value="MITOCARRIER"/>
</dbReference>
<dbReference type="SMART" id="SM00054">
    <property type="entry name" value="EFh"/>
    <property type="match status" value="3"/>
</dbReference>
<dbReference type="SUPFAM" id="SSF47473">
    <property type="entry name" value="EF-hand"/>
    <property type="match status" value="2"/>
</dbReference>
<dbReference type="SUPFAM" id="SSF103506">
    <property type="entry name" value="Mitochondrial carrier"/>
    <property type="match status" value="1"/>
</dbReference>
<dbReference type="PROSITE" id="PS00018">
    <property type="entry name" value="EF_HAND_1"/>
    <property type="match status" value="1"/>
</dbReference>
<dbReference type="PROSITE" id="PS50222">
    <property type="entry name" value="EF_HAND_2"/>
    <property type="match status" value="2"/>
</dbReference>
<dbReference type="PROSITE" id="PS50920">
    <property type="entry name" value="SOLCAR"/>
    <property type="match status" value="3"/>
</dbReference>
<comment type="function">
    <text evidence="1 2">Mitochondrial electrogenic aspartate/glutamate antiporter that favors efflux of aspartate and entry of glutamate and proton within the mitochondria as part of the malate-aspartate shuttle. Also mediates the uptake of L-cysteinesulfinate (3-sulfino-L-alanine) by mitochondria in exchange of L-glutamate and proton. Can also exchange L-cysteinesulfinate with aspartate in their anionic form without any proton translocation (By similarity). Lacks transport activity towards L-glutamine or gamma-aminobutyric acid (GABA) (By similarity).</text>
</comment>
<comment type="catalytic activity">
    <reaction evidence="2">
        <text>L-aspartate(in) + L-glutamate(out) + H(+)(out) = L-aspartate(out) + L-glutamate(in) + H(+)(in)</text>
        <dbReference type="Rhea" id="RHEA:70783"/>
        <dbReference type="ChEBI" id="CHEBI:15378"/>
        <dbReference type="ChEBI" id="CHEBI:29985"/>
        <dbReference type="ChEBI" id="CHEBI:29991"/>
    </reaction>
</comment>
<comment type="catalytic activity">
    <reaction evidence="2">
        <text>3-sulfino-L-alanine(out) + L-glutamate(in) + H(+)(in) = 3-sulfino-L-alanine(in) + L-glutamate(out) + H(+)(out)</text>
        <dbReference type="Rhea" id="RHEA:70967"/>
        <dbReference type="ChEBI" id="CHEBI:15378"/>
        <dbReference type="ChEBI" id="CHEBI:29985"/>
        <dbReference type="ChEBI" id="CHEBI:61085"/>
    </reaction>
</comment>
<comment type="catalytic activity">
    <reaction evidence="1">
        <text>3-sulfino-L-alanine(out) + L-aspartate(in) = 3-sulfino-L-alanine(in) + L-aspartate(out)</text>
        <dbReference type="Rhea" id="RHEA:70975"/>
        <dbReference type="ChEBI" id="CHEBI:29991"/>
        <dbReference type="ChEBI" id="CHEBI:61085"/>
    </reaction>
</comment>
<comment type="subunit">
    <text evidence="2">Homodimer (via N-terminus).</text>
</comment>
<comment type="subcellular location">
    <subcellularLocation>
        <location evidence="2">Mitochondrion inner membrane</location>
        <topology evidence="2">Multi-pass membrane protein</topology>
    </subcellularLocation>
</comment>
<comment type="domain">
    <text evidence="2">The EF-hand 2 domain within the regulatory N-terminal domain binds one calcium in the mitochondrial intermembrane space. Calcium triggers the binding of the regulatory N-terminal domain to the C-terminal domain, opening a vestibule which allows the substrates to be translocated through the carrier domain. In the absence of calcium, the linker loop domain may close the vestibule and prevent substrates from entering the carrier domain.</text>
</comment>
<comment type="similarity">
    <text evidence="5">Belongs to the mitochondrial carrier (TC 2.A.29) family.</text>
</comment>